<feature type="chain" id="PRO_1000068316" description="Peptide methionine sulfoxide reductase MsrA">
    <location>
        <begin position="1"/>
        <end position="176"/>
    </location>
</feature>
<feature type="active site" evidence="1">
    <location>
        <position position="10"/>
    </location>
</feature>
<sequence length="176" mass="19904">MEKAILGGGCFWCLEAAFSQLKGVERVVSGYCGGHTDSPDYRQVCSGDSGHVEVVEISYDPALIDYATLLQVFFAVHDPTTLNRQGHDVGTQYASAIFYLDETQRECARRVIAQLDAEQIFDAPIVTRVESAPRFHPAEDYHQNYYAQNQQQNYCQLVISPKLAKIRRRFSHLLQN</sequence>
<protein>
    <recommendedName>
        <fullName evidence="1">Peptide methionine sulfoxide reductase MsrA</fullName>
        <shortName evidence="1">Protein-methionine-S-oxide reductase</shortName>
        <ecNumber evidence="1">1.8.4.11</ecNumber>
    </recommendedName>
    <alternativeName>
        <fullName evidence="1">Peptide-methionine (S)-S-oxide reductase</fullName>
        <shortName evidence="1">Peptide Met(O) reductase</shortName>
    </alternativeName>
</protein>
<reference key="1">
    <citation type="journal article" date="2003" name="Proc. Natl. Acad. Sci. U.S.A.">
        <title>The complete genome sequence of Chromobacterium violaceum reveals remarkable and exploitable bacterial adaptability.</title>
        <authorList>
            <person name="Vasconcelos A.T.R."/>
            <person name="de Almeida D.F."/>
            <person name="Hungria M."/>
            <person name="Guimaraes C.T."/>
            <person name="Antonio R.V."/>
            <person name="Almeida F.C."/>
            <person name="de Almeida L.G.P."/>
            <person name="de Almeida R."/>
            <person name="Alves-Gomes J.A."/>
            <person name="Andrade E.M."/>
            <person name="Araripe J."/>
            <person name="de Araujo M.F.F."/>
            <person name="Astolfi-Filho S."/>
            <person name="Azevedo V."/>
            <person name="Baptista A.J."/>
            <person name="Bataus L.A.M."/>
            <person name="Batista J.S."/>
            <person name="Belo A."/>
            <person name="van den Berg C."/>
            <person name="Bogo M."/>
            <person name="Bonatto S."/>
            <person name="Bordignon J."/>
            <person name="Brigido M.M."/>
            <person name="Brito C.A."/>
            <person name="Brocchi M."/>
            <person name="Burity H.A."/>
            <person name="Camargo A.A."/>
            <person name="Cardoso D.D.P."/>
            <person name="Carneiro N.P."/>
            <person name="Carraro D.M."/>
            <person name="Carvalho C.M.B."/>
            <person name="Cascardo J.C.M."/>
            <person name="Cavada B.S."/>
            <person name="Chueire L.M.O."/>
            <person name="Creczynski-Pasa T.B."/>
            <person name="Cunha-Junior N.C."/>
            <person name="Fagundes N."/>
            <person name="Falcao C.L."/>
            <person name="Fantinatti F."/>
            <person name="Farias I.P."/>
            <person name="Felipe M.S.S."/>
            <person name="Ferrari L.P."/>
            <person name="Ferro J.A."/>
            <person name="Ferro M.I.T."/>
            <person name="Franco G.R."/>
            <person name="Freitas N.S.A."/>
            <person name="Furlan L.R."/>
            <person name="Gazzinelli R.T."/>
            <person name="Gomes E.A."/>
            <person name="Goncalves P.R."/>
            <person name="Grangeiro T.B."/>
            <person name="Grattapaglia D."/>
            <person name="Grisard E.C."/>
            <person name="Hanna E.S."/>
            <person name="Jardim S.N."/>
            <person name="Laurino J."/>
            <person name="Leoi L.C.T."/>
            <person name="Lima L.F.A."/>
            <person name="Loureiro M.F."/>
            <person name="Lyra M.C.C.P."/>
            <person name="Madeira H.M.F."/>
            <person name="Manfio G.P."/>
            <person name="Maranhao A.Q."/>
            <person name="Martins W.S."/>
            <person name="di Mauro S.M.Z."/>
            <person name="de Medeiros S.R.B."/>
            <person name="Meissner R.V."/>
            <person name="Moreira M.A.M."/>
            <person name="Nascimento F.F."/>
            <person name="Nicolas M.F."/>
            <person name="Oliveira J.G."/>
            <person name="Oliveira S.C."/>
            <person name="Paixao R.F.C."/>
            <person name="Parente J.A."/>
            <person name="Pedrosa F.O."/>
            <person name="Pena S.D.J."/>
            <person name="Pereira J.O."/>
            <person name="Pereira M."/>
            <person name="Pinto L.S.R.C."/>
            <person name="Pinto L.S."/>
            <person name="Porto J.I.R."/>
            <person name="Potrich D.P."/>
            <person name="Ramalho-Neto C.E."/>
            <person name="Reis A.M.M."/>
            <person name="Rigo L.U."/>
            <person name="Rondinelli E."/>
            <person name="Santos E.B.P."/>
            <person name="Santos F.R."/>
            <person name="Schneider M.P.C."/>
            <person name="Seuanez H.N."/>
            <person name="Silva A.M.R."/>
            <person name="da Silva A.L.C."/>
            <person name="Silva D.W."/>
            <person name="Silva R."/>
            <person name="Simoes I.C."/>
            <person name="Simon D."/>
            <person name="Soares C.M.A."/>
            <person name="Soares R.B.A."/>
            <person name="Souza E.M."/>
            <person name="Souza K.R.L."/>
            <person name="Souza R.C."/>
            <person name="Steffens M.B.R."/>
            <person name="Steindel M."/>
            <person name="Teixeira S.R."/>
            <person name="Urmenyi T."/>
            <person name="Vettore A."/>
            <person name="Wassem R."/>
            <person name="Zaha A."/>
            <person name="Simpson A.J.G."/>
        </authorList>
    </citation>
    <scope>NUCLEOTIDE SEQUENCE [LARGE SCALE GENOMIC DNA]</scope>
    <source>
        <strain>ATCC 12472 / DSM 30191 / JCM 1249 / CCUG 213 / NBRC 12614 / NCIMB 9131 / NCTC 9757 / MK</strain>
    </source>
</reference>
<proteinExistence type="inferred from homology"/>
<accession>Q7NVL7</accession>
<name>MSRA_CHRVO</name>
<gene>
    <name evidence="1" type="primary">msrA</name>
    <name type="ordered locus">CV_2325</name>
</gene>
<dbReference type="EC" id="1.8.4.11" evidence="1"/>
<dbReference type="EMBL" id="AE016825">
    <property type="protein sequence ID" value="AAQ59997.1"/>
    <property type="molecule type" value="Genomic_DNA"/>
</dbReference>
<dbReference type="RefSeq" id="WP_011135872.1">
    <property type="nucleotide sequence ID" value="NC_005085.1"/>
</dbReference>
<dbReference type="SMR" id="Q7NVL7"/>
<dbReference type="STRING" id="243365.CV_2325"/>
<dbReference type="GeneID" id="66367979"/>
<dbReference type="KEGG" id="cvi:CV_2325"/>
<dbReference type="eggNOG" id="COG0225">
    <property type="taxonomic scope" value="Bacteria"/>
</dbReference>
<dbReference type="HOGENOM" id="CLU_031040_10_0_4"/>
<dbReference type="OrthoDB" id="4174719at2"/>
<dbReference type="Proteomes" id="UP000001424">
    <property type="component" value="Chromosome"/>
</dbReference>
<dbReference type="GO" id="GO:0033744">
    <property type="term" value="F:L-methionine:thioredoxin-disulfide S-oxidoreductase activity"/>
    <property type="evidence" value="ECO:0007669"/>
    <property type="project" value="RHEA"/>
</dbReference>
<dbReference type="GO" id="GO:0008113">
    <property type="term" value="F:peptide-methionine (S)-S-oxide reductase activity"/>
    <property type="evidence" value="ECO:0007669"/>
    <property type="project" value="UniProtKB-UniRule"/>
</dbReference>
<dbReference type="GO" id="GO:0036211">
    <property type="term" value="P:protein modification process"/>
    <property type="evidence" value="ECO:0007669"/>
    <property type="project" value="UniProtKB-UniRule"/>
</dbReference>
<dbReference type="Gene3D" id="3.30.1060.10">
    <property type="entry name" value="Peptide methionine sulphoxide reductase MsrA"/>
    <property type="match status" value="1"/>
</dbReference>
<dbReference type="HAMAP" id="MF_01401">
    <property type="entry name" value="MsrA"/>
    <property type="match status" value="1"/>
</dbReference>
<dbReference type="InterPro" id="IPR002569">
    <property type="entry name" value="Met_Sox_Rdtase_MsrA_dom"/>
</dbReference>
<dbReference type="InterPro" id="IPR036509">
    <property type="entry name" value="Met_Sox_Rdtase_MsrA_sf"/>
</dbReference>
<dbReference type="NCBIfam" id="TIGR00401">
    <property type="entry name" value="msrA"/>
    <property type="match status" value="1"/>
</dbReference>
<dbReference type="PANTHER" id="PTHR43774">
    <property type="entry name" value="PEPTIDE METHIONINE SULFOXIDE REDUCTASE"/>
    <property type="match status" value="1"/>
</dbReference>
<dbReference type="PANTHER" id="PTHR43774:SF1">
    <property type="entry name" value="PEPTIDE METHIONINE SULFOXIDE REDUCTASE MSRA 2"/>
    <property type="match status" value="1"/>
</dbReference>
<dbReference type="Pfam" id="PF01625">
    <property type="entry name" value="PMSR"/>
    <property type="match status" value="1"/>
</dbReference>
<dbReference type="SUPFAM" id="SSF55068">
    <property type="entry name" value="Peptide methionine sulfoxide reductase"/>
    <property type="match status" value="1"/>
</dbReference>
<evidence type="ECO:0000255" key="1">
    <source>
        <dbReference type="HAMAP-Rule" id="MF_01401"/>
    </source>
</evidence>
<comment type="function">
    <text evidence="1">Has an important function as a repair enzyme for proteins that have been inactivated by oxidation. Catalyzes the reversible oxidation-reduction of methionine sulfoxide in proteins to methionine.</text>
</comment>
<comment type="catalytic activity">
    <reaction evidence="1">
        <text>L-methionyl-[protein] + [thioredoxin]-disulfide + H2O = L-methionyl-(S)-S-oxide-[protein] + [thioredoxin]-dithiol</text>
        <dbReference type="Rhea" id="RHEA:14217"/>
        <dbReference type="Rhea" id="RHEA-COMP:10698"/>
        <dbReference type="Rhea" id="RHEA-COMP:10700"/>
        <dbReference type="Rhea" id="RHEA-COMP:12313"/>
        <dbReference type="Rhea" id="RHEA-COMP:12315"/>
        <dbReference type="ChEBI" id="CHEBI:15377"/>
        <dbReference type="ChEBI" id="CHEBI:16044"/>
        <dbReference type="ChEBI" id="CHEBI:29950"/>
        <dbReference type="ChEBI" id="CHEBI:44120"/>
        <dbReference type="ChEBI" id="CHEBI:50058"/>
        <dbReference type="EC" id="1.8.4.11"/>
    </reaction>
</comment>
<comment type="catalytic activity">
    <reaction evidence="1">
        <text>[thioredoxin]-disulfide + L-methionine + H2O = L-methionine (S)-S-oxide + [thioredoxin]-dithiol</text>
        <dbReference type="Rhea" id="RHEA:19993"/>
        <dbReference type="Rhea" id="RHEA-COMP:10698"/>
        <dbReference type="Rhea" id="RHEA-COMP:10700"/>
        <dbReference type="ChEBI" id="CHEBI:15377"/>
        <dbReference type="ChEBI" id="CHEBI:29950"/>
        <dbReference type="ChEBI" id="CHEBI:50058"/>
        <dbReference type="ChEBI" id="CHEBI:57844"/>
        <dbReference type="ChEBI" id="CHEBI:58772"/>
        <dbReference type="EC" id="1.8.4.11"/>
    </reaction>
</comment>
<comment type="similarity">
    <text evidence="1">Belongs to the MsrA Met sulfoxide reductase family.</text>
</comment>
<keyword id="KW-0560">Oxidoreductase</keyword>
<keyword id="KW-1185">Reference proteome</keyword>
<organism>
    <name type="scientific">Chromobacterium violaceum (strain ATCC 12472 / DSM 30191 / JCM 1249 / CCUG 213 / NBRC 12614 / NCIMB 9131 / NCTC 9757 / MK)</name>
    <dbReference type="NCBI Taxonomy" id="243365"/>
    <lineage>
        <taxon>Bacteria</taxon>
        <taxon>Pseudomonadati</taxon>
        <taxon>Pseudomonadota</taxon>
        <taxon>Betaproteobacteria</taxon>
        <taxon>Neisseriales</taxon>
        <taxon>Chromobacteriaceae</taxon>
        <taxon>Chromobacterium</taxon>
    </lineage>
</organism>